<protein>
    <recommendedName>
        <fullName>Probable histone-arginine methyltransferase 1.4</fullName>
        <shortName>AtPRMT14</shortName>
        <ecNumber>2.1.1.319</ecNumber>
    </recommendedName>
    <alternativeName>
        <fullName>Coactivator-associated methyltransferase 1B</fullName>
    </alternativeName>
    <alternativeName>
        <fullName>Protein arginine N-methyltransferase 4A</fullName>
        <shortName>AtPRMT4A</shortName>
    </alternativeName>
</protein>
<comment type="function">
    <text evidence="1">Methylates (mono- and asymmetric dimethylation) the guanidino nitrogens of arginyl residues in several proteins involved in DNA packaging, transcription regulation, and mRNA stability. Recruited to promoters upon gene activation, methylates histone H3 and activates transcription via chromatin remodeling.</text>
</comment>
<comment type="catalytic activity">
    <reaction>
        <text>L-arginyl-[protein] + 2 S-adenosyl-L-methionine = N(omega),N(omega)-dimethyl-L-arginyl-[protein] + 2 S-adenosyl-L-homocysteine + 2 H(+)</text>
        <dbReference type="Rhea" id="RHEA:48096"/>
        <dbReference type="Rhea" id="RHEA-COMP:10532"/>
        <dbReference type="Rhea" id="RHEA-COMP:11991"/>
        <dbReference type="ChEBI" id="CHEBI:15378"/>
        <dbReference type="ChEBI" id="CHEBI:29965"/>
        <dbReference type="ChEBI" id="CHEBI:57856"/>
        <dbReference type="ChEBI" id="CHEBI:59789"/>
        <dbReference type="ChEBI" id="CHEBI:61897"/>
        <dbReference type="EC" id="2.1.1.319"/>
    </reaction>
</comment>
<comment type="subcellular location">
    <subcellularLocation>
        <location evidence="1">Nucleus</location>
    </subcellularLocation>
    <subcellularLocation>
        <location evidence="1">Cytoplasm</location>
    </subcellularLocation>
</comment>
<comment type="alternative products">
    <event type="alternative splicing"/>
    <isoform>
        <id>A3KPF2-1</id>
        <name>1</name>
        <sequence type="displayed"/>
    </isoform>
    <isoform>
        <id>A3KPF2-2</id>
        <name>2</name>
        <sequence type="described" ref="VSP_026577"/>
    </isoform>
</comment>
<comment type="similarity">
    <text evidence="2">Belongs to the class I-like SAM-binding methyltransferase superfamily. Protein arginine N-methyltransferase family.</text>
</comment>
<comment type="sequence caution" evidence="3">
    <conflict type="erroneous gene model prediction">
        <sequence resource="EMBL-CDS" id="BAB10326"/>
    </conflict>
</comment>
<accession>A3KPF2</accession>
<accession>Q3E8E0</accession>
<accession>Q84WN5</accession>
<accession>Q9FI68</accession>
<feature type="chain" id="PRO_0000294005" description="Probable histone-arginine methyltransferase 1.4">
    <location>
        <begin position="1"/>
        <end position="528"/>
    </location>
</feature>
<feature type="domain" description="SAM-dependent MTase PRMT-type" evidence="2">
    <location>
        <begin position="144"/>
        <end position="459"/>
    </location>
</feature>
<feature type="active site" evidence="1">
    <location>
        <position position="260"/>
    </location>
</feature>
<feature type="active site" evidence="1">
    <location>
        <position position="269"/>
    </location>
</feature>
<feature type="binding site" evidence="1">
    <location>
        <position position="161"/>
    </location>
    <ligand>
        <name>S-adenosyl-L-methionine</name>
        <dbReference type="ChEBI" id="CHEBI:59789"/>
    </ligand>
</feature>
<feature type="binding site" evidence="1">
    <location>
        <position position="170"/>
    </location>
    <ligand>
        <name>S-adenosyl-L-methionine</name>
        <dbReference type="ChEBI" id="CHEBI:59789"/>
    </ligand>
</feature>
<feature type="binding site" evidence="1">
    <location>
        <position position="194"/>
    </location>
    <ligand>
        <name>S-adenosyl-L-methionine</name>
        <dbReference type="ChEBI" id="CHEBI:59789"/>
    </ligand>
</feature>
<feature type="binding site" evidence="1">
    <location>
        <position position="216"/>
    </location>
    <ligand>
        <name>S-adenosyl-L-methionine</name>
        <dbReference type="ChEBI" id="CHEBI:59789"/>
    </ligand>
</feature>
<feature type="binding site" evidence="1">
    <location>
        <position position="246"/>
    </location>
    <ligand>
        <name>S-adenosyl-L-methionine</name>
        <dbReference type="ChEBI" id="CHEBI:59789"/>
    </ligand>
</feature>
<feature type="binding site" evidence="1">
    <location>
        <position position="274"/>
    </location>
    <ligand>
        <name>S-adenosyl-L-methionine</name>
        <dbReference type="ChEBI" id="CHEBI:59789"/>
    </ligand>
</feature>
<feature type="modified residue" description="N-acetylmethionine" evidence="4">
    <location>
        <position position="1"/>
    </location>
</feature>
<feature type="splice variant" id="VSP_026577" description="In isoform 2." evidence="3">
    <location>
        <begin position="123"/>
        <end position="124"/>
    </location>
</feature>
<name>ANM14_ARATH</name>
<proteinExistence type="evidence at protein level"/>
<reference key="1">
    <citation type="journal article" date="1999" name="DNA Res.">
        <title>Structural analysis of Arabidopsis thaliana chromosome 5. IX. Sequence features of the regions of 1,011,550 bp covered by seventeen P1 and TAC clones.</title>
        <authorList>
            <person name="Kaneko T."/>
            <person name="Katoh T."/>
            <person name="Sato S."/>
            <person name="Nakamura Y."/>
            <person name="Asamizu E."/>
            <person name="Kotani H."/>
            <person name="Miyajima N."/>
            <person name="Tabata S."/>
        </authorList>
    </citation>
    <scope>NUCLEOTIDE SEQUENCE [LARGE SCALE GENOMIC DNA]</scope>
    <source>
        <strain>cv. Columbia</strain>
    </source>
</reference>
<reference key="2">
    <citation type="journal article" date="2017" name="Plant J.">
        <title>Araport11: a complete reannotation of the Arabidopsis thaliana reference genome.</title>
        <authorList>
            <person name="Cheng C.Y."/>
            <person name="Krishnakumar V."/>
            <person name="Chan A.P."/>
            <person name="Thibaud-Nissen F."/>
            <person name="Schobel S."/>
            <person name="Town C.D."/>
        </authorList>
    </citation>
    <scope>GENOME REANNOTATION</scope>
    <source>
        <strain>cv. Columbia</strain>
    </source>
</reference>
<reference key="3">
    <citation type="submission" date="2007-02" db="EMBL/GenBank/DDBJ databases">
        <title>Arabidopsis ORF clones.</title>
        <authorList>
            <person name="Bautista V.R."/>
            <person name="Kim C.J."/>
            <person name="Chen H."/>
            <person name="Wu S.Y."/>
            <person name="De Los Reyes C."/>
            <person name="Ecker J.R."/>
        </authorList>
    </citation>
    <scope>NUCLEOTIDE SEQUENCE [LARGE SCALE MRNA]</scope>
    <source>
        <strain>cv. Columbia</strain>
    </source>
</reference>
<reference key="4">
    <citation type="journal article" date="2003" name="Science">
        <title>Empirical analysis of transcriptional activity in the Arabidopsis genome.</title>
        <authorList>
            <person name="Yamada K."/>
            <person name="Lim J."/>
            <person name="Dale J.M."/>
            <person name="Chen H."/>
            <person name="Shinn P."/>
            <person name="Palm C.J."/>
            <person name="Southwick A.M."/>
            <person name="Wu H.C."/>
            <person name="Kim C.J."/>
            <person name="Nguyen M."/>
            <person name="Pham P.K."/>
            <person name="Cheuk R.F."/>
            <person name="Karlin-Newmann G."/>
            <person name="Liu S.X."/>
            <person name="Lam B."/>
            <person name="Sakano H."/>
            <person name="Wu T."/>
            <person name="Yu G."/>
            <person name="Miranda M."/>
            <person name="Quach H.L."/>
            <person name="Tripp M."/>
            <person name="Chang C.H."/>
            <person name="Lee J.M."/>
            <person name="Toriumi M.J."/>
            <person name="Chan M.M."/>
            <person name="Tang C.C."/>
            <person name="Onodera C.S."/>
            <person name="Deng J.M."/>
            <person name="Akiyama K."/>
            <person name="Ansari Y."/>
            <person name="Arakawa T."/>
            <person name="Banh J."/>
            <person name="Banno F."/>
            <person name="Bowser L."/>
            <person name="Brooks S.Y."/>
            <person name="Carninci P."/>
            <person name="Chao Q."/>
            <person name="Choy N."/>
            <person name="Enju A."/>
            <person name="Goldsmith A.D."/>
            <person name="Gurjal M."/>
            <person name="Hansen N.F."/>
            <person name="Hayashizaki Y."/>
            <person name="Johnson-Hopson C."/>
            <person name="Hsuan V.W."/>
            <person name="Iida K."/>
            <person name="Karnes M."/>
            <person name="Khan S."/>
            <person name="Koesema E."/>
            <person name="Ishida J."/>
            <person name="Jiang P.X."/>
            <person name="Jones T."/>
            <person name="Kawai J."/>
            <person name="Kamiya A."/>
            <person name="Meyers C."/>
            <person name="Nakajima M."/>
            <person name="Narusaka M."/>
            <person name="Seki M."/>
            <person name="Sakurai T."/>
            <person name="Satou M."/>
            <person name="Tamse R."/>
            <person name="Vaysberg M."/>
            <person name="Wallender E.K."/>
            <person name="Wong C."/>
            <person name="Yamamura Y."/>
            <person name="Yuan S."/>
            <person name="Shinozaki K."/>
            <person name="Davis R.W."/>
            <person name="Theologis A."/>
            <person name="Ecker J.R."/>
        </authorList>
    </citation>
    <scope>NUCLEOTIDE SEQUENCE [LARGE SCALE MRNA] OF 94-528</scope>
    <source>
        <strain>cv. Columbia</strain>
    </source>
</reference>
<reference key="5">
    <citation type="journal article" date="2012" name="Mol. Cell. Proteomics">
        <title>Comparative large-scale characterisation of plant vs. mammal proteins reveals similar and idiosyncratic N-alpha acetylation features.</title>
        <authorList>
            <person name="Bienvenut W.V."/>
            <person name="Sumpton D."/>
            <person name="Martinez A."/>
            <person name="Lilla S."/>
            <person name="Espagne C."/>
            <person name="Meinnel T."/>
            <person name="Giglione C."/>
        </authorList>
    </citation>
    <scope>ACETYLATION [LARGE SCALE ANALYSIS] AT MET-1</scope>
    <scope>IDENTIFICATION BY MASS SPECTROMETRY [LARGE SCALE ANALYSIS]</scope>
</reference>
<organism>
    <name type="scientific">Arabidopsis thaliana</name>
    <name type="common">Mouse-ear cress</name>
    <dbReference type="NCBI Taxonomy" id="3702"/>
    <lineage>
        <taxon>Eukaryota</taxon>
        <taxon>Viridiplantae</taxon>
        <taxon>Streptophyta</taxon>
        <taxon>Embryophyta</taxon>
        <taxon>Tracheophyta</taxon>
        <taxon>Spermatophyta</taxon>
        <taxon>Magnoliopsida</taxon>
        <taxon>eudicotyledons</taxon>
        <taxon>Gunneridae</taxon>
        <taxon>Pentapetalae</taxon>
        <taxon>rosids</taxon>
        <taxon>malvids</taxon>
        <taxon>Brassicales</taxon>
        <taxon>Brassicaceae</taxon>
        <taxon>Camelineae</taxon>
        <taxon>Arabidopsis</taxon>
    </lineage>
</organism>
<keyword id="KW-0007">Acetylation</keyword>
<keyword id="KW-0025">Alternative splicing</keyword>
<keyword id="KW-0156">Chromatin regulator</keyword>
<keyword id="KW-0963">Cytoplasm</keyword>
<keyword id="KW-0489">Methyltransferase</keyword>
<keyword id="KW-0539">Nucleus</keyword>
<keyword id="KW-1185">Reference proteome</keyword>
<keyword id="KW-0949">S-adenosyl-L-methionine</keyword>
<keyword id="KW-0804">Transcription</keyword>
<keyword id="KW-0805">Transcription regulation</keyword>
<keyword id="KW-0808">Transferase</keyword>
<gene>
    <name type="primary">PRMT14</name>
    <name type="synonym">CARM1B</name>
    <name type="synonym">PRMT4A</name>
    <name type="ordered locus">At5g49020</name>
    <name type="ORF">K19E20.17</name>
</gene>
<sequence>MEIPSLNKQQEFTLASVTDLTSPSSSLSSSPVVATFSCVNEVKELRFQESKSSDGFSFDLSSTQLFKLGPLQFTCVSDGSISSAKEKSSFSRGVVIKFRDEKDSKEFCDSFEECKKDDAVKQGSALPNGTVVSANKSKFDDKIEAASAKMYFHYYGQLLHQQNMLQDYVRTGTYHAAVMENRSDFSGRVVVDVGAGSGILSMFAALAGAKHVYAVEASEMAEYARKLIAGNPLLAERITVIKGKIEDIELPEKADVLISEPMGTLLVNERMLETYVIARDRFLSPNGKMFPTVGRIHMAPFADEFLFVEMANKALFWQQQNYYGVDLTPLYVSAHQGYFSQPVVDAFDPRLLVAPSMFHVIDFTMMTEEQFYEIDIPLKFTASVCTRIHGLACWFDVLFDGSTVQRWFTTAPGAPTTHWYQIRCVLSQPIHVMAGQEITGRLHLIAHSAQSYTINLTLSAKMWGPGANQGGILQTSSCKLDLKEPYYRMSQPQVYPTQEPPAQSQDIHIHSDDLEELELLQQNANAQL</sequence>
<dbReference type="EC" id="2.1.1.319"/>
<dbReference type="EMBL" id="AB017061">
    <property type="protein sequence ID" value="BAB10326.1"/>
    <property type="status" value="ALT_SEQ"/>
    <property type="molecule type" value="Genomic_DNA"/>
</dbReference>
<dbReference type="EMBL" id="CP002688">
    <property type="protein sequence ID" value="AED95760.1"/>
    <property type="molecule type" value="Genomic_DNA"/>
</dbReference>
<dbReference type="EMBL" id="CP002688">
    <property type="protein sequence ID" value="AED95761.1"/>
    <property type="molecule type" value="Genomic_DNA"/>
</dbReference>
<dbReference type="EMBL" id="BT030319">
    <property type="protein sequence ID" value="ABO09883.1"/>
    <property type="molecule type" value="mRNA"/>
</dbReference>
<dbReference type="EMBL" id="BT030323">
    <property type="protein sequence ID" value="ABO09886.1"/>
    <property type="molecule type" value="mRNA"/>
</dbReference>
<dbReference type="EMBL" id="BT002972">
    <property type="protein sequence ID" value="AAO22781.1"/>
    <property type="molecule type" value="mRNA"/>
</dbReference>
<dbReference type="RefSeq" id="NP_199713.2">
    <molecule id="A3KPF2-1"/>
    <property type="nucleotide sequence ID" value="NM_124279.5"/>
</dbReference>
<dbReference type="RefSeq" id="NP_974913.1">
    <molecule id="A3KPF2-2"/>
    <property type="nucleotide sequence ID" value="NM_203184.2"/>
</dbReference>
<dbReference type="SMR" id="A3KPF2"/>
<dbReference type="BioGRID" id="20207">
    <property type="interactions" value="2"/>
</dbReference>
<dbReference type="FunCoup" id="A3KPF2">
    <property type="interactions" value="3638"/>
</dbReference>
<dbReference type="STRING" id="3702.A3KPF2"/>
<dbReference type="iPTMnet" id="A3KPF2"/>
<dbReference type="PaxDb" id="3702-AT5G49020.1"/>
<dbReference type="ProteomicsDB" id="244422">
    <molecule id="A3KPF2-1"/>
</dbReference>
<dbReference type="EnsemblPlants" id="AT5G49020.1">
    <molecule id="A3KPF2-1"/>
    <property type="protein sequence ID" value="AT5G49020.1"/>
    <property type="gene ID" value="AT5G49020"/>
</dbReference>
<dbReference type="EnsemblPlants" id="AT5G49020.2">
    <molecule id="A3KPF2-2"/>
    <property type="protein sequence ID" value="AT5G49020.2"/>
    <property type="gene ID" value="AT5G49020"/>
</dbReference>
<dbReference type="GeneID" id="834961"/>
<dbReference type="Gramene" id="AT5G49020.1">
    <molecule id="A3KPF2-1"/>
    <property type="protein sequence ID" value="AT5G49020.1"/>
    <property type="gene ID" value="AT5G49020"/>
</dbReference>
<dbReference type="Gramene" id="AT5G49020.2">
    <molecule id="A3KPF2-2"/>
    <property type="protein sequence ID" value="AT5G49020.2"/>
    <property type="gene ID" value="AT5G49020"/>
</dbReference>
<dbReference type="KEGG" id="ath:AT5G49020"/>
<dbReference type="Araport" id="AT5G49020"/>
<dbReference type="TAIR" id="AT5G49020">
    <property type="gene designation" value="PRMT4A"/>
</dbReference>
<dbReference type="eggNOG" id="KOG1500">
    <property type="taxonomic scope" value="Eukaryota"/>
</dbReference>
<dbReference type="InParanoid" id="A3KPF2"/>
<dbReference type="OMA" id="MHLPNGA"/>
<dbReference type="PhylomeDB" id="A3KPF2"/>
<dbReference type="PRO" id="PR:A3KPF2"/>
<dbReference type="Proteomes" id="UP000006548">
    <property type="component" value="Chromosome 5"/>
</dbReference>
<dbReference type="ExpressionAtlas" id="A3KPF2">
    <property type="expression patterns" value="baseline and differential"/>
</dbReference>
<dbReference type="GO" id="GO:0009507">
    <property type="term" value="C:chloroplast"/>
    <property type="evidence" value="ECO:0007005"/>
    <property type="project" value="TAIR"/>
</dbReference>
<dbReference type="GO" id="GO:0005737">
    <property type="term" value="C:cytoplasm"/>
    <property type="evidence" value="ECO:0000314"/>
    <property type="project" value="TAIR"/>
</dbReference>
<dbReference type="GO" id="GO:0005634">
    <property type="term" value="C:nucleus"/>
    <property type="evidence" value="ECO:0000314"/>
    <property type="project" value="TAIR"/>
</dbReference>
<dbReference type="GO" id="GO:0008469">
    <property type="term" value="F:histone arginine N-methyltransferase activity"/>
    <property type="evidence" value="ECO:0000314"/>
    <property type="project" value="TAIR"/>
</dbReference>
<dbReference type="GO" id="GO:0046982">
    <property type="term" value="F:protein heterodimerization activity"/>
    <property type="evidence" value="ECO:0000353"/>
    <property type="project" value="TAIR"/>
</dbReference>
<dbReference type="GO" id="GO:0042803">
    <property type="term" value="F:protein homodimerization activity"/>
    <property type="evidence" value="ECO:0000353"/>
    <property type="project" value="TAIR"/>
</dbReference>
<dbReference type="GO" id="GO:0035242">
    <property type="term" value="F:protein-arginine omega-N asymmetric methyltransferase activity"/>
    <property type="evidence" value="ECO:0000314"/>
    <property type="project" value="TAIR"/>
</dbReference>
<dbReference type="GO" id="GO:0035241">
    <property type="term" value="F:protein-arginine omega-N monomethyltransferase activity"/>
    <property type="evidence" value="ECO:0000314"/>
    <property type="project" value="TAIR"/>
</dbReference>
<dbReference type="GO" id="GO:0019919">
    <property type="term" value="P:peptidyl-arginine methylation, to asymmetrical-dimethyl arginine"/>
    <property type="evidence" value="ECO:0000314"/>
    <property type="project" value="TAIR"/>
</dbReference>
<dbReference type="GO" id="GO:0009909">
    <property type="term" value="P:regulation of flower development"/>
    <property type="evidence" value="ECO:0000316"/>
    <property type="project" value="TAIR"/>
</dbReference>
<dbReference type="GO" id="GO:0010228">
    <property type="term" value="P:vegetative to reproductive phase transition of meristem"/>
    <property type="evidence" value="ECO:0000316"/>
    <property type="project" value="TAIR"/>
</dbReference>
<dbReference type="CDD" id="cd02440">
    <property type="entry name" value="AdoMet_MTases"/>
    <property type="match status" value="1"/>
</dbReference>
<dbReference type="FunFam" id="2.70.160.11:FF:000002">
    <property type="entry name" value="Probable histone-arginine methyltransferase CARM1"/>
    <property type="match status" value="1"/>
</dbReference>
<dbReference type="FunFam" id="3.40.50.150:FF:000052">
    <property type="entry name" value="Probable histone-arginine methyltransferase CARM1"/>
    <property type="match status" value="1"/>
</dbReference>
<dbReference type="Gene3D" id="2.70.160.11">
    <property type="entry name" value="Hnrnp arginine n-methyltransferase1"/>
    <property type="match status" value="1"/>
</dbReference>
<dbReference type="Gene3D" id="3.40.50.150">
    <property type="entry name" value="Vaccinia Virus protein VP39"/>
    <property type="match status" value="1"/>
</dbReference>
<dbReference type="InterPro" id="IPR025799">
    <property type="entry name" value="Arg_MeTrfase"/>
</dbReference>
<dbReference type="InterPro" id="IPR055135">
    <property type="entry name" value="PRMT_dom"/>
</dbReference>
<dbReference type="InterPro" id="IPR029063">
    <property type="entry name" value="SAM-dependent_MTases_sf"/>
</dbReference>
<dbReference type="PANTHER" id="PTHR11006:SF101">
    <property type="entry name" value="HISTONE-ARGININE METHYLTRANSFERASE 1.4-RELATED"/>
    <property type="match status" value="1"/>
</dbReference>
<dbReference type="PANTHER" id="PTHR11006">
    <property type="entry name" value="PROTEIN ARGININE N-METHYLTRANSFERASE"/>
    <property type="match status" value="1"/>
</dbReference>
<dbReference type="Pfam" id="PF25350">
    <property type="entry name" value="PH_PRMT_N"/>
    <property type="match status" value="1"/>
</dbReference>
<dbReference type="Pfam" id="PF06325">
    <property type="entry name" value="PrmA"/>
    <property type="match status" value="1"/>
</dbReference>
<dbReference type="Pfam" id="PF22528">
    <property type="entry name" value="PRMT_C"/>
    <property type="match status" value="1"/>
</dbReference>
<dbReference type="SUPFAM" id="SSF53335">
    <property type="entry name" value="S-adenosyl-L-methionine-dependent methyltransferases"/>
    <property type="match status" value="1"/>
</dbReference>
<dbReference type="PROSITE" id="PS51678">
    <property type="entry name" value="SAM_MT_PRMT"/>
    <property type="match status" value="1"/>
</dbReference>
<evidence type="ECO:0000250" key="1"/>
<evidence type="ECO:0000255" key="2">
    <source>
        <dbReference type="PROSITE-ProRule" id="PRU01015"/>
    </source>
</evidence>
<evidence type="ECO:0000305" key="3"/>
<evidence type="ECO:0007744" key="4">
    <source>
    </source>
</evidence>